<gene>
    <name evidence="3" type="primary">pycTM</name>
    <name evidence="2" type="ORF">Ga0100804_10531</name>
</gene>
<accession>P0DV43</accession>
<dbReference type="EMBL" id="LIVN01000053">
    <property type="status" value="NOT_ANNOTATED_CDS"/>
    <property type="molecule type" value="Genomic_DNA"/>
</dbReference>
<dbReference type="GO" id="GO:0005886">
    <property type="term" value="C:plasma membrane"/>
    <property type="evidence" value="ECO:0007669"/>
    <property type="project" value="UniProtKB-SubCell"/>
</dbReference>
<dbReference type="GO" id="GO:0000166">
    <property type="term" value="F:nucleotide binding"/>
    <property type="evidence" value="ECO:0007669"/>
    <property type="project" value="UniProtKB-KW"/>
</dbReference>
<dbReference type="GO" id="GO:0051607">
    <property type="term" value="P:defense response to virus"/>
    <property type="evidence" value="ECO:0007669"/>
    <property type="project" value="UniProtKB-KW"/>
</dbReference>
<dbReference type="InterPro" id="IPR043760">
    <property type="entry name" value="PycTM"/>
</dbReference>
<dbReference type="Pfam" id="PF18967">
    <property type="entry name" value="PycTM"/>
    <property type="match status" value="1"/>
</dbReference>
<reference key="1">
    <citation type="journal article" date="2015" name="Genome Announc.">
        <title>Draft Genome Sequence of Gulbenkiania mobilis Strain MB1, a Sulfur-Metabolizing Thermophile Isolated from a Hot Spring in Central India.</title>
        <authorList>
            <person name="Saxena R."/>
            <person name="Chaudhary N."/>
            <person name="Dhakan D.B."/>
            <person name="Sharma V.K."/>
        </authorList>
    </citation>
    <scope>NUCLEOTIDE SEQUENCE [LARGE SCALE GENOMIC DNA]</scope>
    <source>
        <strain>MB1</strain>
    </source>
</reference>
<reference key="2">
    <citation type="journal article" date="2021" name="Cell">
        <title>Cyclic CMP and cyclic UMP mediate bacterial immunity against phages.</title>
        <authorList>
            <person name="Tal N."/>
            <person name="Morehouse B.R."/>
            <person name="Millman A."/>
            <person name="Stokar-Avihail A."/>
            <person name="Avraham C."/>
            <person name="Fedorenko T."/>
            <person name="Yirmiya E."/>
            <person name="Herbst E."/>
            <person name="Brandis A."/>
            <person name="Mehlman T."/>
            <person name="Oppenheimer-Shaanan Y."/>
            <person name="Keszei A.F.A."/>
            <person name="Shao S."/>
            <person name="Amitai G."/>
            <person name="Kranzusch P.J."/>
            <person name="Sorek R."/>
        </authorList>
    </citation>
    <scope>PROBABLE FUNCTION</scope>
    <scope>CLASSIFICATION</scope>
    <source>
        <strain>MB1</strain>
    </source>
</reference>
<evidence type="ECO:0000255" key="1"/>
<evidence type="ECO:0000303" key="2">
    <source>
    </source>
</evidence>
<evidence type="ECO:0000303" key="3">
    <source>
    </source>
</evidence>
<evidence type="ECO:0000305" key="4"/>
<evidence type="ECO:0000305" key="5">
    <source>
    </source>
</evidence>
<name>PCTM_GULMO</name>
<sequence>MSEENKLSESEIKEEAVQTLERINFWISNCDTKISFSLAFAGILLGGFFSSGIITGSLNKLMKGLKEIDKDTPYLKIQYLEITTIVLVVFIILMIVSLTYLFRGKKGSIDTGVFNEADLSKDSILFFGTIQNKSFISFKNSVIEIKKDDLVNDYLSQVYINSKICNRKFTLYNKGVNWLIASTIVFIILNGMFLFL</sequence>
<proteinExistence type="inferred from homology"/>
<comment type="function">
    <text evidence="5">Pycsar (pyrimidine cyclase system for antiphage resistance) provides immunity against bacteriophage. The pyrimidine cyclase (PycC) synthesizes cyclic nucleotides in response to infection; these serve as specific second messenger signals. The signals activate the adjacent effector, leading to bacterial cell death and abortive phage infection. A clade C Pycsar system.</text>
</comment>
<comment type="function">
    <text evidence="5">The effector gene of a two-gene Pycsar system. Expression of this and adjacent uridylate cyclase GmPycC (AC P0DV42) probably confers resistance to bacteriophage. The genes are probably only expressed in response to bacteriophage infection. Probably only responds to cUMP (produced by its cognate NTP cyclase), acts by impairing membrane integrity.</text>
</comment>
<comment type="subcellular location">
    <subcellularLocation>
        <location evidence="4">Cell inner membrane</location>
        <topology evidence="1">Multi-pass membrane protein</topology>
    </subcellularLocation>
</comment>
<protein>
    <recommendedName>
        <fullName>Pycsar effector protein GmPycTM</fullName>
        <shortName evidence="3">GmPycTM</shortName>
    </recommendedName>
</protein>
<keyword id="KW-0051">Antiviral defense</keyword>
<keyword id="KW-0997">Cell inner membrane</keyword>
<keyword id="KW-1003">Cell membrane</keyword>
<keyword id="KW-0472">Membrane</keyword>
<keyword id="KW-0547">Nucleotide-binding</keyword>
<keyword id="KW-0812">Transmembrane</keyword>
<keyword id="KW-1133">Transmembrane helix</keyword>
<feature type="chain" id="PRO_0000455234" description="Pycsar effector protein GmPycTM">
    <location>
        <begin position="1"/>
        <end position="196"/>
    </location>
</feature>
<feature type="transmembrane region" description="Helical" evidence="1">
    <location>
        <begin position="34"/>
        <end position="54"/>
    </location>
</feature>
<feature type="transmembrane region" description="Helical" evidence="1">
    <location>
        <begin position="82"/>
        <end position="102"/>
    </location>
</feature>
<feature type="transmembrane region" description="Helical" evidence="1">
    <location>
        <begin position="176"/>
        <end position="196"/>
    </location>
</feature>
<organism>
    <name type="scientific">Gulbenkiania mobilis</name>
    <dbReference type="NCBI Taxonomy" id="397457"/>
    <lineage>
        <taxon>Bacteria</taxon>
        <taxon>Pseudomonadati</taxon>
        <taxon>Pseudomonadota</taxon>
        <taxon>Betaproteobacteria</taxon>
        <taxon>Neisseriales</taxon>
        <taxon>Chromobacteriaceae</taxon>
        <taxon>Gulbenkiania</taxon>
    </lineage>
</organism>